<gene>
    <name evidence="2" type="primary">trmB</name>
    <name type="ordered locus">Bpro_2905</name>
</gene>
<organism>
    <name type="scientific">Polaromonas sp. (strain JS666 / ATCC BAA-500)</name>
    <dbReference type="NCBI Taxonomy" id="296591"/>
    <lineage>
        <taxon>Bacteria</taxon>
        <taxon>Pseudomonadati</taxon>
        <taxon>Pseudomonadota</taxon>
        <taxon>Betaproteobacteria</taxon>
        <taxon>Burkholderiales</taxon>
        <taxon>Comamonadaceae</taxon>
        <taxon>Polaromonas</taxon>
    </lineage>
</organism>
<comment type="function">
    <text evidence="2">Catalyzes the formation of N(7)-methylguanine at position 46 (m7G46) in tRNA.</text>
</comment>
<comment type="catalytic activity">
    <reaction evidence="2">
        <text>guanosine(46) in tRNA + S-adenosyl-L-methionine = N(7)-methylguanosine(46) in tRNA + S-adenosyl-L-homocysteine</text>
        <dbReference type="Rhea" id="RHEA:42708"/>
        <dbReference type="Rhea" id="RHEA-COMP:10188"/>
        <dbReference type="Rhea" id="RHEA-COMP:10189"/>
        <dbReference type="ChEBI" id="CHEBI:57856"/>
        <dbReference type="ChEBI" id="CHEBI:59789"/>
        <dbReference type="ChEBI" id="CHEBI:74269"/>
        <dbReference type="ChEBI" id="CHEBI:74480"/>
        <dbReference type="EC" id="2.1.1.33"/>
    </reaction>
</comment>
<comment type="pathway">
    <text evidence="2">tRNA modification; N(7)-methylguanine-tRNA biosynthesis.</text>
</comment>
<comment type="similarity">
    <text evidence="2">Belongs to the class I-like SAM-binding methyltransferase superfamily. TrmB family.</text>
</comment>
<reference key="1">
    <citation type="journal article" date="2008" name="Appl. Environ. Microbiol.">
        <title>The genome of Polaromonas sp. strain JS666: insights into the evolution of a hydrocarbon- and xenobiotic-degrading bacterium, and features of relevance to biotechnology.</title>
        <authorList>
            <person name="Mattes T.E."/>
            <person name="Alexander A.K."/>
            <person name="Richardson P.M."/>
            <person name="Munk A.C."/>
            <person name="Han C.S."/>
            <person name="Stothard P."/>
            <person name="Coleman N.V."/>
        </authorList>
    </citation>
    <scope>NUCLEOTIDE SEQUENCE [LARGE SCALE GENOMIC DNA]</scope>
    <source>
        <strain>JS666 / ATCC BAA-500</strain>
    </source>
</reference>
<sequence>MIENPSPSAANLPEHPSTDASHPRNIRSFVRRTGRTTVGQAKAFADVGPRFLLAYKAEPLDFAAAFGRVAPTILEIGFGMGEATAHIAALSPDKNFLCCEVHTPGVGALLKRIQEQTLGNIRILQHDAVEVIDNMLPAGSLDGVHIFFPDPWHKKKHNKRRLIQAPLIAKLAARLKPGGYLHCATDWQPYAEQILEVLSAEALLKNTADASGGGYAPKPDYRPLTKFENRGIKLGHGVWDVVFTRV</sequence>
<accession>Q129H3</accession>
<keyword id="KW-0489">Methyltransferase</keyword>
<keyword id="KW-1185">Reference proteome</keyword>
<keyword id="KW-0949">S-adenosyl-L-methionine</keyword>
<keyword id="KW-0808">Transferase</keyword>
<keyword id="KW-0819">tRNA processing</keyword>
<protein>
    <recommendedName>
        <fullName evidence="2">tRNA (guanine-N(7)-)-methyltransferase</fullName>
        <ecNumber evidence="2">2.1.1.33</ecNumber>
    </recommendedName>
    <alternativeName>
        <fullName evidence="2">tRNA (guanine(46)-N(7))-methyltransferase</fullName>
    </alternativeName>
    <alternativeName>
        <fullName evidence="2">tRNA(m7G46)-methyltransferase</fullName>
    </alternativeName>
</protein>
<name>TRMB_POLSJ</name>
<dbReference type="EC" id="2.1.1.33" evidence="2"/>
<dbReference type="EMBL" id="CP000316">
    <property type="protein sequence ID" value="ABE44819.1"/>
    <property type="molecule type" value="Genomic_DNA"/>
</dbReference>
<dbReference type="RefSeq" id="WP_011483817.1">
    <property type="nucleotide sequence ID" value="NC_007948.1"/>
</dbReference>
<dbReference type="SMR" id="Q129H3"/>
<dbReference type="STRING" id="296591.Bpro_2905"/>
<dbReference type="KEGG" id="pol:Bpro_2905"/>
<dbReference type="eggNOG" id="COG0220">
    <property type="taxonomic scope" value="Bacteria"/>
</dbReference>
<dbReference type="HOGENOM" id="CLU_050910_0_1_4"/>
<dbReference type="OrthoDB" id="9802090at2"/>
<dbReference type="UniPathway" id="UPA00989"/>
<dbReference type="Proteomes" id="UP000001983">
    <property type="component" value="Chromosome"/>
</dbReference>
<dbReference type="GO" id="GO:0043527">
    <property type="term" value="C:tRNA methyltransferase complex"/>
    <property type="evidence" value="ECO:0007669"/>
    <property type="project" value="TreeGrafter"/>
</dbReference>
<dbReference type="GO" id="GO:0008176">
    <property type="term" value="F:tRNA (guanine(46)-N7)-methyltransferase activity"/>
    <property type="evidence" value="ECO:0007669"/>
    <property type="project" value="UniProtKB-UniRule"/>
</dbReference>
<dbReference type="CDD" id="cd02440">
    <property type="entry name" value="AdoMet_MTases"/>
    <property type="match status" value="1"/>
</dbReference>
<dbReference type="FunFam" id="3.40.50.150:FF:000035">
    <property type="entry name" value="tRNA (guanine-N(7)-)-methyltransferase"/>
    <property type="match status" value="1"/>
</dbReference>
<dbReference type="Gene3D" id="3.40.50.150">
    <property type="entry name" value="Vaccinia Virus protein VP39"/>
    <property type="match status" value="1"/>
</dbReference>
<dbReference type="HAMAP" id="MF_01057">
    <property type="entry name" value="tRNA_methyltr_TrmB"/>
    <property type="match status" value="1"/>
</dbReference>
<dbReference type="InterPro" id="IPR029063">
    <property type="entry name" value="SAM-dependent_MTases_sf"/>
</dbReference>
<dbReference type="InterPro" id="IPR003358">
    <property type="entry name" value="tRNA_(Gua-N-7)_MeTrfase_Trmb"/>
</dbReference>
<dbReference type="InterPro" id="IPR055361">
    <property type="entry name" value="tRNA_methyltr_TrmB_bact"/>
</dbReference>
<dbReference type="NCBIfam" id="TIGR00091">
    <property type="entry name" value="tRNA (guanosine(46)-N7)-methyltransferase TrmB"/>
    <property type="match status" value="1"/>
</dbReference>
<dbReference type="PANTHER" id="PTHR23417">
    <property type="entry name" value="3-DEOXY-D-MANNO-OCTULOSONIC-ACID TRANSFERASE/TRNA GUANINE-N 7 - -METHYLTRANSFERASE"/>
    <property type="match status" value="1"/>
</dbReference>
<dbReference type="PANTHER" id="PTHR23417:SF14">
    <property type="entry name" value="PENTACOTRIPEPTIDE-REPEAT REGION OF PRORP DOMAIN-CONTAINING PROTEIN"/>
    <property type="match status" value="1"/>
</dbReference>
<dbReference type="Pfam" id="PF02390">
    <property type="entry name" value="Methyltransf_4"/>
    <property type="match status" value="1"/>
</dbReference>
<dbReference type="SUPFAM" id="SSF53335">
    <property type="entry name" value="S-adenosyl-L-methionine-dependent methyltransferases"/>
    <property type="match status" value="1"/>
</dbReference>
<dbReference type="PROSITE" id="PS51625">
    <property type="entry name" value="SAM_MT_TRMB"/>
    <property type="match status" value="1"/>
</dbReference>
<proteinExistence type="inferred from homology"/>
<evidence type="ECO:0000250" key="1"/>
<evidence type="ECO:0000255" key="2">
    <source>
        <dbReference type="HAMAP-Rule" id="MF_01057"/>
    </source>
</evidence>
<evidence type="ECO:0000256" key="3">
    <source>
        <dbReference type="SAM" id="MobiDB-lite"/>
    </source>
</evidence>
<feature type="chain" id="PRO_0000288197" description="tRNA (guanine-N(7)-)-methyltransferase">
    <location>
        <begin position="1"/>
        <end position="246"/>
    </location>
</feature>
<feature type="region of interest" description="Disordered" evidence="3">
    <location>
        <begin position="1"/>
        <end position="26"/>
    </location>
</feature>
<feature type="region of interest" description="Interaction with RNA" evidence="2">
    <location>
        <begin position="156"/>
        <end position="161"/>
    </location>
</feature>
<feature type="active site" evidence="1">
    <location>
        <position position="150"/>
    </location>
</feature>
<feature type="binding site" evidence="2">
    <location>
        <position position="75"/>
    </location>
    <ligand>
        <name>S-adenosyl-L-methionine</name>
        <dbReference type="ChEBI" id="CHEBI:59789"/>
    </ligand>
</feature>
<feature type="binding site" evidence="2">
    <location>
        <position position="100"/>
    </location>
    <ligand>
        <name>S-adenosyl-L-methionine</name>
        <dbReference type="ChEBI" id="CHEBI:59789"/>
    </ligand>
</feature>
<feature type="binding site" evidence="2">
    <location>
        <position position="127"/>
    </location>
    <ligand>
        <name>S-adenosyl-L-methionine</name>
        <dbReference type="ChEBI" id="CHEBI:59789"/>
    </ligand>
</feature>
<feature type="binding site" evidence="2">
    <location>
        <position position="150"/>
    </location>
    <ligand>
        <name>S-adenosyl-L-methionine</name>
        <dbReference type="ChEBI" id="CHEBI:59789"/>
    </ligand>
</feature>
<feature type="binding site" evidence="2">
    <location>
        <position position="154"/>
    </location>
    <ligand>
        <name>substrate</name>
    </ligand>
</feature>
<feature type="binding site" evidence="2">
    <location>
        <position position="186"/>
    </location>
    <ligand>
        <name>substrate</name>
    </ligand>
</feature>
<feature type="binding site" evidence="2">
    <location>
        <begin position="225"/>
        <end position="228"/>
    </location>
    <ligand>
        <name>substrate</name>
    </ligand>
</feature>